<sequence>MTIRNQRFSLLKQPISSTLNQHLVDYPTPSNLSYWWGFGSLAGICLVIQIVTGVFLAMHYTPHVDLAFNSVEHIMRDVEGGWLLRYMHANGASMFFIVVYLHIFRGLYYASYSSPREFVWCLGVVIFLLMIVTAFIGYVLPWGQMSFWGATVITSLASAIPVVGDTIVTWLWGGFSVDNATLNRFFSLHYLLPFILVGASLLHLAALHQYGSNNPLGVHSEMDKIAFYPYFYVKDLVGWVAFAIFFSIWIFYAPNVLGHPDNYIPANPMSTPPHIVPEWYFLPIYAILRSIPDKAGGVAAIALVFICLLALPFFKSMYVRSSSFRPIYQGMFWLLLADCLLLGWIGCQPVEAPFVTIGQISSLVFFLFFAITPILGRVGRGIPNSYTDETDHT</sequence>
<gene>
    <name type="primary">MT-CYB</name>
    <name type="synonym">COB</name>
    <name type="synonym">CYTB</name>
    <name type="synonym">MTCYB</name>
    <name evidence="13" type="ordered locus">AtMg00220</name>
</gene>
<gene>
    <name evidence="12" type="ordered locus">At2g07727</name>
</gene>
<comment type="function">
    <text evidence="3">Component of the ubiquinol-cytochrome c oxidoreductase, a multisubunit transmembrane complex that is part of the mitochondrial electron transport chain which drives oxidative phosphorylation. The respiratory chain contains 3 multisubunit complexes succinate dehydrogenase (complex II, CII), ubiquinol-cytochrome c oxidoreductase (cytochrome b-c1 complex, complex III, CIII) and cytochrome c oxidase (complex IV, CIV), that cooperate to transfer electrons derived from NADH and succinate to molecular oxygen, creating an electrochemical gradient over the inner membrane that drives transmembrane transport and the ATP synthase. The cytochrome b-c1 complex catalyzes electron transfer from ubiquinol to cytochrome c, linking this redox reaction to translocation of protons across the mitochondrial inner membrane, with protons being carried across the membrane as hydrogens on the quinol. In the process called Q cycle, 2 protons are consumed from the matrix, 4 protons are released into the intermembrane space and 2 electrons are passed to cytochrome c. Cytochrome b is a catalytic core subunit containing 2 b-type hemes BL and BH topographically segregated in the quinone reduction (Qi) and quinol oxidation (Q0) sites on opposite sides of the membrane.</text>
</comment>
<comment type="cofactor">
    <cofactor evidence="3">
        <name>heme b</name>
        <dbReference type="ChEBI" id="CHEBI:60344"/>
    </cofactor>
    <text evidence="3">Binds 2 heme b groups non-covalently.</text>
</comment>
<comment type="subunit">
    <text evidence="7 8 9">Component of the ubiquinol-cytochrome c oxidoreductase (cytochrome b-c1 complex, complex III, CIII), a multisubunit enzyme composed of 10 subunits. The complex is composed of 3 respiratory subunits cytochrome b (MT-CYB), cytochrome c1 (CYC1-1 or CYC1-2) and Rieske protein (UCR1-1 or UCR1-2), 2 core protein subunits MPPalpha1 (or MPPalpha2) and MPPB, and 5 low-molecular weight protein subunits QCR7-1 (or QCR7-2), UCRQ-1 (or UCRQ-2), QCR9, UCRY and probably QCR6-1 (or QCR6-2) (PubMed:18189341, PubMed:18305213). The complex exists as an obligatory dimer and forms supercomplexes (SCs) in the inner mitochondrial membrane with NADH-ubiquinone oxidoreductase (complex I, CI), resulting in different assemblies (supercomplexes SCI(1)III(2) and SCI(2)III(4)) (PubMed:12970493).</text>
</comment>
<comment type="subcellular location">
    <subcellularLocation>
        <location evidence="8">Mitochondrion inner membrane</location>
        <topology evidence="3">Multi-pass membrane protein</topology>
    </subcellularLocation>
</comment>
<comment type="RNA editing">
    <location>
        <position position="40" evidence="10 11"/>
    </location>
    <location>
        <position position="96" evidence="6 10"/>
    </location>
    <location>
        <position position="109" evidence="6 10"/>
    </location>
    <location>
        <position position="190" evidence="6 10"/>
    </location>
    <location>
        <position position="285" evidence="6 10"/>
    </location>
    <location>
        <position position="303" evidence="6 10"/>
    </location>
    <location>
        <position position="328" evidence="6 10"/>
    </location>
    <location>
        <position position="362" evidence="6 10"/>
    </location>
</comment>
<comment type="miscellaneous">
    <text>A stretch of 270 kb of the mitochondrial genome is duplicated within the centromere of chromosome 2 resulting in the duplication of the gene. The expression of this duplicated gene (At2g07727) is not demonstrated. It is also probably not RNA edited and therefore differs in all the positions known to be edited.</text>
</comment>
<comment type="miscellaneous">
    <text evidence="1">Heme 1 (or BL or b562) is low-potential and absorbs at about 562 nm, and heme 2 (or BH or b566) is high-potential and absorbs at about 566 nm.</text>
</comment>
<comment type="similarity">
    <text evidence="4 5">Belongs to the cytochrome b family.</text>
</comment>
<comment type="caution">
    <text evidence="3">The protein contains only eight transmembrane helices, not nine as predicted by bioinformatics tools.</text>
</comment>
<name>CYB_ARATH</name>
<organism>
    <name type="scientific">Arabidopsis thaliana</name>
    <name type="common">Mouse-ear cress</name>
    <dbReference type="NCBI Taxonomy" id="3702"/>
    <lineage>
        <taxon>Eukaryota</taxon>
        <taxon>Viridiplantae</taxon>
        <taxon>Streptophyta</taxon>
        <taxon>Embryophyta</taxon>
        <taxon>Tracheophyta</taxon>
        <taxon>Spermatophyta</taxon>
        <taxon>Magnoliopsida</taxon>
        <taxon>eudicotyledons</taxon>
        <taxon>Gunneridae</taxon>
        <taxon>Pentapetalae</taxon>
        <taxon>rosids</taxon>
        <taxon>malvids</taxon>
        <taxon>Brassicales</taxon>
        <taxon>Brassicaceae</taxon>
        <taxon>Camelineae</taxon>
        <taxon>Arabidopsis</taxon>
    </lineage>
</organism>
<protein>
    <recommendedName>
        <fullName>Cytochrome b</fullName>
    </recommendedName>
    <alternativeName>
        <fullName>Complex III subunit 3</fullName>
    </alternativeName>
    <alternativeName>
        <fullName>Complex III subunit III</fullName>
    </alternativeName>
    <alternativeName>
        <fullName>Cytochrome b-c1 complex subunit 3</fullName>
    </alternativeName>
    <alternativeName>
        <fullName>Ubiquinol-cytochrome-c reductase complex cytochrome b subunit</fullName>
    </alternativeName>
</protein>
<evidence type="ECO:0000250" key="1"/>
<evidence type="ECO:0000250" key="2">
    <source>
        <dbReference type="UniProtKB" id="P00157"/>
    </source>
</evidence>
<evidence type="ECO:0000250" key="3">
    <source>
        <dbReference type="UniProtKB" id="P00163"/>
    </source>
</evidence>
<evidence type="ECO:0000255" key="4">
    <source>
        <dbReference type="PROSITE-ProRule" id="PRU00967"/>
    </source>
</evidence>
<evidence type="ECO:0000255" key="5">
    <source>
        <dbReference type="PROSITE-ProRule" id="PRU00968"/>
    </source>
</evidence>
<evidence type="ECO:0000269" key="6">
    <source>
    </source>
</evidence>
<evidence type="ECO:0000269" key="7">
    <source>
    </source>
</evidence>
<evidence type="ECO:0000269" key="8">
    <source>
    </source>
</evidence>
<evidence type="ECO:0000269" key="9">
    <source>
    </source>
</evidence>
<evidence type="ECO:0000269" key="10">
    <source>
    </source>
</evidence>
<evidence type="ECO:0000269" key="11">
    <source>
    </source>
</evidence>
<evidence type="ECO:0000312" key="12">
    <source>
        <dbReference type="Araport" id="AT2G07727"/>
    </source>
</evidence>
<evidence type="ECO:0000312" key="13">
    <source>
        <dbReference type="Araport" id="ATMG00220"/>
    </source>
</evidence>
<evidence type="ECO:0007829" key="14">
    <source>
        <dbReference type="PDB" id="8BEL"/>
    </source>
</evidence>
<dbReference type="EMBL" id="X67736">
    <property type="protein sequence ID" value="CAA47966.1"/>
    <property type="status" value="ALT_SEQ"/>
    <property type="molecule type" value="Genomic_DNA"/>
</dbReference>
<dbReference type="EMBL" id="Y08501">
    <property type="protein sequence ID" value="CAA69766.3"/>
    <property type="status" value="ALT_SEQ"/>
    <property type="molecule type" value="Genomic_DNA"/>
</dbReference>
<dbReference type="EMBL" id="JF729200">
    <property type="protein sequence ID" value="AEK01250.1"/>
    <property type="status" value="ALT_SEQ"/>
    <property type="molecule type" value="Genomic_DNA"/>
</dbReference>
<dbReference type="EMBL" id="JF729201">
    <property type="protein sequence ID" value="AEK01285.1"/>
    <property type="status" value="ALT_SEQ"/>
    <property type="molecule type" value="Genomic_DNA"/>
</dbReference>
<dbReference type="EMBL" id="JF729202">
    <property type="protein sequence ID" value="AEK01318.1"/>
    <property type="status" value="ALT_SEQ"/>
    <property type="molecule type" value="Genomic_DNA"/>
</dbReference>
<dbReference type="EMBL" id="BK010421">
    <property type="protein sequence ID" value="DAB41506.2"/>
    <property type="molecule type" value="Genomic_DNA"/>
</dbReference>
<dbReference type="EMBL" id="AC006225">
    <property type="protein sequence ID" value="AAM15165.1"/>
    <property type="status" value="ALT_SEQ"/>
    <property type="molecule type" value="Genomic_DNA"/>
</dbReference>
<dbReference type="EMBL" id="CP002685">
    <property type="protein sequence ID" value="AEC06108.1"/>
    <property type="status" value="ALT_SEQ"/>
    <property type="molecule type" value="Genomic_DNA"/>
</dbReference>
<dbReference type="PIR" id="S38960">
    <property type="entry name" value="S38960"/>
</dbReference>
<dbReference type="RefSeq" id="NP_085492.1">
    <property type="nucleotide sequence ID" value="NC_001284.2"/>
</dbReference>
<dbReference type="RefSeq" id="NP_178804.1">
    <property type="nucleotide sequence ID" value="NM_126762.3"/>
</dbReference>
<dbReference type="PDB" id="8BEL">
    <property type="method" value="EM"/>
    <property type="resolution" value="2.25 A"/>
    <property type="chains" value="C/M=1-393"/>
</dbReference>
<dbReference type="PDB" id="8BPX">
    <property type="method" value="EM"/>
    <property type="resolution" value="2.09 A"/>
    <property type="chains" value="AC/BC=1-393"/>
</dbReference>
<dbReference type="PDB" id="8BQ5">
    <property type="method" value="EM"/>
    <property type="resolution" value="2.73 A"/>
    <property type="chains" value="AC/BC=1-393"/>
</dbReference>
<dbReference type="PDB" id="8BQ6">
    <property type="method" value="EM"/>
    <property type="resolution" value="2.80 A"/>
    <property type="chains" value="AC/BC=1-393"/>
</dbReference>
<dbReference type="PDBsum" id="8BEL"/>
<dbReference type="PDBsum" id="8BPX"/>
<dbReference type="PDBsum" id="8BQ5"/>
<dbReference type="PDBsum" id="8BQ6"/>
<dbReference type="EMDB" id="EMD-16007"/>
<dbReference type="EMDB" id="EMD-16168"/>
<dbReference type="EMDB" id="EMD-16171"/>
<dbReference type="EMDB" id="EMD-16172"/>
<dbReference type="SMR" id="P42792"/>
<dbReference type="BioGRID" id="789">
    <property type="interactions" value="1"/>
</dbReference>
<dbReference type="FunCoup" id="P42792">
    <property type="interactions" value="149"/>
</dbReference>
<dbReference type="IntAct" id="P42792">
    <property type="interactions" value="12"/>
</dbReference>
<dbReference type="MINT" id="P42792"/>
<dbReference type="STRING" id="3702.A0A2P2CLG2"/>
<dbReference type="GlyGen" id="P42792">
    <property type="glycosylation" value="1 site"/>
</dbReference>
<dbReference type="PaxDb" id="3702-AT2G07727.1"/>
<dbReference type="GeneID" id="815400"/>
<dbReference type="KEGG" id="ath:AT2G07727"/>
<dbReference type="Araport" id="AT2G07727"/>
<dbReference type="Araport" id="ATMG00220"/>
<dbReference type="TAIR" id="AT2G07727"/>
<dbReference type="TAIR" id="ATMG00220">
    <property type="gene designation" value="COB"/>
</dbReference>
<dbReference type="eggNOG" id="KOG4663">
    <property type="taxonomic scope" value="Eukaryota"/>
</dbReference>
<dbReference type="HOGENOM" id="CLU_031114_3_0_1"/>
<dbReference type="InParanoid" id="P42792"/>
<dbReference type="OrthoDB" id="1917301at2759"/>
<dbReference type="PhylomeDB" id="P42792"/>
<dbReference type="BioCyc" id="ARA:ATMG00220-MONOMER"/>
<dbReference type="BioCyc" id="ARA:MONOMER-8804"/>
<dbReference type="BioCyc" id="MetaCyc:ATMG00220-MONOMER"/>
<dbReference type="PRO" id="PR:P42792"/>
<dbReference type="Proteomes" id="UP000006548">
    <property type="component" value="Chromosome 2"/>
</dbReference>
<dbReference type="Proteomes" id="UP000006548">
    <property type="component" value="Mitochondrion MT"/>
</dbReference>
<dbReference type="ExpressionAtlas" id="P42792">
    <property type="expression patterns" value="baseline"/>
</dbReference>
<dbReference type="GO" id="GO:0016020">
    <property type="term" value="C:membrane"/>
    <property type="evidence" value="ECO:0000318"/>
    <property type="project" value="GO_Central"/>
</dbReference>
<dbReference type="GO" id="GO:0005743">
    <property type="term" value="C:mitochondrial inner membrane"/>
    <property type="evidence" value="ECO:0007669"/>
    <property type="project" value="UniProtKB-SubCell"/>
</dbReference>
<dbReference type="GO" id="GO:0045275">
    <property type="term" value="C:respiratory chain complex III"/>
    <property type="evidence" value="ECO:0000318"/>
    <property type="project" value="GO_Central"/>
</dbReference>
<dbReference type="GO" id="GO:0046872">
    <property type="term" value="F:metal ion binding"/>
    <property type="evidence" value="ECO:0007669"/>
    <property type="project" value="UniProtKB-KW"/>
</dbReference>
<dbReference type="GO" id="GO:0008121">
    <property type="term" value="F:ubiquinol-cytochrome-c reductase activity"/>
    <property type="evidence" value="ECO:0007669"/>
    <property type="project" value="InterPro"/>
</dbReference>
<dbReference type="GO" id="GO:0006122">
    <property type="term" value="P:mitochondrial electron transport, ubiquinol to cytochrome c"/>
    <property type="evidence" value="ECO:0000318"/>
    <property type="project" value="GO_Central"/>
</dbReference>
<dbReference type="CDD" id="cd00290">
    <property type="entry name" value="cytochrome_b_C"/>
    <property type="match status" value="1"/>
</dbReference>
<dbReference type="CDD" id="cd00284">
    <property type="entry name" value="Cytochrome_b_N"/>
    <property type="match status" value="1"/>
</dbReference>
<dbReference type="FunFam" id="1.20.810.10:FF:000006">
    <property type="entry name" value="Cytochrome b"/>
    <property type="match status" value="1"/>
</dbReference>
<dbReference type="Gene3D" id="1.20.810.10">
    <property type="entry name" value="Cytochrome Bc1 Complex, Chain C"/>
    <property type="match status" value="1"/>
</dbReference>
<dbReference type="InterPro" id="IPR005798">
    <property type="entry name" value="Cyt_b/b6_C"/>
</dbReference>
<dbReference type="InterPro" id="IPR036150">
    <property type="entry name" value="Cyt_b/b6_C_sf"/>
</dbReference>
<dbReference type="InterPro" id="IPR005797">
    <property type="entry name" value="Cyt_b/b6_N"/>
</dbReference>
<dbReference type="InterPro" id="IPR027387">
    <property type="entry name" value="Cytb/b6-like_sf"/>
</dbReference>
<dbReference type="InterPro" id="IPR030689">
    <property type="entry name" value="Cytochrome_b"/>
</dbReference>
<dbReference type="InterPro" id="IPR048260">
    <property type="entry name" value="Cytochrome_b_C_euk/bac"/>
</dbReference>
<dbReference type="InterPro" id="IPR048259">
    <property type="entry name" value="Cytochrome_b_N_euk/bac"/>
</dbReference>
<dbReference type="InterPro" id="IPR016174">
    <property type="entry name" value="Di-haem_cyt_TM"/>
</dbReference>
<dbReference type="PANTHER" id="PTHR19271">
    <property type="entry name" value="CYTOCHROME B"/>
    <property type="match status" value="1"/>
</dbReference>
<dbReference type="PANTHER" id="PTHR19271:SF16">
    <property type="entry name" value="CYTOCHROME B"/>
    <property type="match status" value="1"/>
</dbReference>
<dbReference type="Pfam" id="PF00032">
    <property type="entry name" value="Cytochrom_B_C"/>
    <property type="match status" value="1"/>
</dbReference>
<dbReference type="Pfam" id="PF00033">
    <property type="entry name" value="Cytochrome_B"/>
    <property type="match status" value="1"/>
</dbReference>
<dbReference type="PIRSF" id="PIRSF038885">
    <property type="entry name" value="COB"/>
    <property type="match status" value="1"/>
</dbReference>
<dbReference type="SUPFAM" id="SSF81648">
    <property type="entry name" value="a domain/subunit of cytochrome bc1 complex (Ubiquinol-cytochrome c reductase)"/>
    <property type="match status" value="1"/>
</dbReference>
<dbReference type="SUPFAM" id="SSF81342">
    <property type="entry name" value="Transmembrane di-heme cytochromes"/>
    <property type="match status" value="1"/>
</dbReference>
<dbReference type="PROSITE" id="PS51003">
    <property type="entry name" value="CYTB_CTER"/>
    <property type="match status" value="1"/>
</dbReference>
<dbReference type="PROSITE" id="PS51002">
    <property type="entry name" value="CYTB_NTER"/>
    <property type="match status" value="1"/>
</dbReference>
<reference key="1">
    <citation type="journal article" date="1993" name="Curr. Genet.">
        <title>An rps14 pseudogene is transcribed and edited in Arabidopsis mitochondria.</title>
        <authorList>
            <person name="Brandt P."/>
            <person name="Unseld M."/>
            <person name="Eckert-Ossenkopp U."/>
            <person name="Brennicke A."/>
        </authorList>
    </citation>
    <scope>NUCLEOTIDE SEQUENCE [GENOMIC DNA]</scope>
    <scope>RNA EDITING</scope>
    <source>
        <strain>cv. Columbia</strain>
    </source>
</reference>
<reference key="2">
    <citation type="journal article" date="1997" name="Nat. Genet.">
        <title>The mitochondrial genome of Arabidopsis thaliana contains 57 genes in 366,924 nucleotides.</title>
        <authorList>
            <person name="Unseld M."/>
            <person name="Marienfeld J.R."/>
            <person name="Brandt P."/>
            <person name="Brennicke A."/>
        </authorList>
    </citation>
    <scope>NUCLEOTIDE SEQUENCE [LARGE SCALE GENOMIC DNA]</scope>
    <source>
        <strain>cv. C24</strain>
    </source>
</reference>
<reference key="3">
    <citation type="journal article" date="2011" name="BMC Biol.">
        <title>Double-strand break repair processes drive evolution of the mitochondrial genome in Arabidopsis.</title>
        <authorList>
            <person name="Davila J.I."/>
            <person name="Arrieta-Montiel M.P."/>
            <person name="Wamboldt Y."/>
            <person name="Cao J."/>
            <person name="Hagmann J."/>
            <person name="Shedge V."/>
            <person name="Xu Y.Z."/>
            <person name="Weigel D."/>
            <person name="Mackenzie S.A."/>
        </authorList>
    </citation>
    <scope>NUCLEOTIDE SEQUENCE [LARGE SCALE GENOMIC DNA]</scope>
    <source>
        <strain>cv. C24</strain>
        <strain>cv. Columbia</strain>
        <strain>cv. Landsberg erecta</strain>
    </source>
</reference>
<reference key="4">
    <citation type="journal article" date="2018" name="Plant Cell">
        <title>Correction of persistent errors in Arabidopsis reference mitochondrial genomes.</title>
        <authorList>
            <person name="Sloan D.B."/>
            <person name="Wu Z."/>
            <person name="Sharbrough J."/>
        </authorList>
    </citation>
    <scope>NUCLEOTIDE SEQUENCE [LARGE SCALE GENOMIC DNA]</scope>
    <scope>RNA EDITING</scope>
    <source>
        <strain>cv. Columbia</strain>
    </source>
</reference>
<reference key="5">
    <citation type="journal article" date="1999" name="Nature">
        <title>Sequence and analysis of chromosome 2 of the plant Arabidopsis thaliana.</title>
        <authorList>
            <person name="Lin X."/>
            <person name="Kaul S."/>
            <person name="Rounsley S.D."/>
            <person name="Shea T.P."/>
            <person name="Benito M.-I."/>
            <person name="Town C.D."/>
            <person name="Fujii C.Y."/>
            <person name="Mason T.M."/>
            <person name="Bowman C.L."/>
            <person name="Barnstead M.E."/>
            <person name="Feldblyum T.V."/>
            <person name="Buell C.R."/>
            <person name="Ketchum K.A."/>
            <person name="Lee J.J."/>
            <person name="Ronning C.M."/>
            <person name="Koo H.L."/>
            <person name="Moffat K.S."/>
            <person name="Cronin L.A."/>
            <person name="Shen M."/>
            <person name="Pai G."/>
            <person name="Van Aken S."/>
            <person name="Umayam L."/>
            <person name="Tallon L.J."/>
            <person name="Gill J.E."/>
            <person name="Adams M.D."/>
            <person name="Carrera A.J."/>
            <person name="Creasy T.H."/>
            <person name="Goodman H.M."/>
            <person name="Somerville C.R."/>
            <person name="Copenhaver G.P."/>
            <person name="Preuss D."/>
            <person name="Nierman W.C."/>
            <person name="White O."/>
            <person name="Eisen J.A."/>
            <person name="Salzberg S.L."/>
            <person name="Fraser C.M."/>
            <person name="Venter J.C."/>
        </authorList>
    </citation>
    <scope>NUCLEOTIDE SEQUENCE [LARGE SCALE GENOMIC DNA] (AT2G07727)</scope>
    <source>
        <strain>cv. Columbia</strain>
    </source>
</reference>
<reference key="6">
    <citation type="journal article" date="2017" name="Plant J.">
        <title>Araport11: a complete reannotation of the Arabidopsis thaliana reference genome.</title>
        <authorList>
            <person name="Cheng C.Y."/>
            <person name="Krishnakumar V."/>
            <person name="Chan A.P."/>
            <person name="Thibaud-Nissen F."/>
            <person name="Schobel S."/>
            <person name="Town C.D."/>
        </authorList>
    </citation>
    <scope>GENOME REANNOTATION (AT2G07727)</scope>
    <source>
        <strain>cv. Columbia</strain>
    </source>
</reference>
<reference key="7">
    <citation type="journal article" date="1999" name="Proc. Natl. Acad. Sci. U.S.A.">
        <title>RNA editing in Arabidopsis mitochondria effects 441 C to U changes in ORFs.</title>
        <authorList>
            <person name="Giege P."/>
            <person name="Brennicke A."/>
        </authorList>
    </citation>
    <scope>RNA EDITING</scope>
</reference>
<reference key="8">
    <citation type="journal article" date="2003" name="Plant Physiol.">
        <title>New insights into the respiratory chain of plant mitochondria. Supercomplexes and a unique composition of complex II.</title>
        <authorList>
            <person name="Eubel H."/>
            <person name="Jansch L."/>
            <person name="Braun H.P."/>
        </authorList>
    </citation>
    <scope>SUBUNIT</scope>
</reference>
<reference key="9">
    <citation type="journal article" date="2008" name="J. Proteome Res.">
        <title>Resolving and identifying protein components of plant mitochondrial respiratory complexes using three dimensions of gel electrophoresis.</title>
        <authorList>
            <person name="Meyer E.H."/>
            <person name="Taylor N.L."/>
            <person name="Millar A.H."/>
        </authorList>
    </citation>
    <scope>SUBCELLULAR LOCATION</scope>
    <scope>SUBUNIT</scope>
    <scope>IDENTIFICATION BY MASS SPECTROMETRY</scope>
</reference>
<reference key="10">
    <citation type="journal article" date="2008" name="Plant Physiol.">
        <title>Arabidopsis PPR40 connects abiotic stress responses to mitochondrial electron transport.</title>
        <authorList>
            <person name="Zsigmond L."/>
            <person name="Rigo G."/>
            <person name="Szarka A."/>
            <person name="Szekely G."/>
            <person name="Oetvoes K."/>
            <person name="Darula Z."/>
            <person name="Medzihradszky K.F."/>
            <person name="Koncz C."/>
            <person name="Koncz Z."/>
            <person name="Szabados L."/>
        </authorList>
    </citation>
    <scope>SUBUNIT</scope>
    <scope>IDENTIFICATION BY MASS SPECTROMETRY</scope>
    <scope>NOMENCLATURE</scope>
    <source>
        <strain>cv. Columbia</strain>
    </source>
</reference>
<accession>P42792</accession>
<accession>A0A2P2CLG2</accession>
<accession>F4IND9</accession>
<accession>P93289</accession>
<proteinExistence type="evidence at protein level"/>
<feature type="chain" id="PRO_0000060615" description="Cytochrome b">
    <location>
        <begin position="1"/>
        <end position="393"/>
    </location>
</feature>
<feature type="topological domain" description="Mitochondrial matrix" evidence="3">
    <location>
        <begin position="1"/>
        <end position="33"/>
    </location>
</feature>
<feature type="transmembrane region" description="Helical" evidence="3">
    <location>
        <begin position="34"/>
        <end position="57"/>
    </location>
</feature>
<feature type="topological domain" description="Mitochondrial intermembrane" evidence="3">
    <location>
        <begin position="58"/>
        <end position="80"/>
    </location>
</feature>
<feature type="transmembrane region" description="Helical" evidence="3">
    <location>
        <begin position="81"/>
        <end position="108"/>
    </location>
</feature>
<feature type="topological domain" description="Mitochondrial matrix" evidence="3">
    <location>
        <begin position="109"/>
        <end position="116"/>
    </location>
</feature>
<feature type="transmembrane region" description="Helical" evidence="3">
    <location>
        <begin position="117"/>
        <end position="141"/>
    </location>
</feature>
<feature type="topological domain" description="Mitochondrial intermembrane" evidence="3">
    <location>
        <begin position="142"/>
        <end position="178"/>
    </location>
</feature>
<feature type="transmembrane region" description="Helical" evidence="3">
    <location>
        <begin position="179"/>
        <end position="210"/>
    </location>
</feature>
<feature type="topological domain" description="Mitochondrial matrix" evidence="3">
    <location>
        <begin position="211"/>
        <end position="229"/>
    </location>
</feature>
<feature type="transmembrane region" description="Helical" evidence="3">
    <location>
        <begin position="230"/>
        <end position="252"/>
    </location>
</feature>
<feature type="topological domain" description="Mitochondrial intermembrane" evidence="3">
    <location>
        <begin position="253"/>
        <end position="293"/>
    </location>
</feature>
<feature type="transmembrane region" description="Helical" evidence="3">
    <location>
        <begin position="294"/>
        <end position="314"/>
    </location>
</feature>
<feature type="topological domain" description="Mitochondrial matrix" evidence="3">
    <location>
        <begin position="315"/>
        <end position="325"/>
    </location>
</feature>
<feature type="transmembrane region" description="Helical" evidence="3">
    <location>
        <begin position="326"/>
        <end position="346"/>
    </location>
</feature>
<feature type="topological domain" description="Mitochondrial intermembrane" evidence="3">
    <location>
        <begin position="347"/>
        <end position="353"/>
    </location>
</feature>
<feature type="transmembrane region" description="Helical" evidence="3">
    <location>
        <begin position="354"/>
        <end position="370"/>
    </location>
</feature>
<feature type="topological domain" description="Mitochondrial matrix" evidence="3">
    <location>
        <begin position="371"/>
        <end position="393"/>
    </location>
</feature>
<feature type="binding site" description="axial binding residue" evidence="3">
    <location>
        <position position="88"/>
    </location>
    <ligand>
        <name>heme b</name>
        <dbReference type="ChEBI" id="CHEBI:60344"/>
        <label>b562</label>
    </ligand>
    <ligandPart>
        <name>Fe</name>
        <dbReference type="ChEBI" id="CHEBI:18248"/>
    </ligandPart>
</feature>
<feature type="binding site" description="axial binding residue" evidence="3">
    <location>
        <position position="102"/>
    </location>
    <ligand>
        <name>heme b</name>
        <dbReference type="ChEBI" id="CHEBI:60344"/>
        <label>b566</label>
    </ligand>
    <ligandPart>
        <name>Fe</name>
        <dbReference type="ChEBI" id="CHEBI:18248"/>
    </ligandPart>
</feature>
<feature type="binding site" description="axial binding residue" evidence="3">
    <location>
        <position position="189"/>
    </location>
    <ligand>
        <name>heme b</name>
        <dbReference type="ChEBI" id="CHEBI:60344"/>
        <label>b562</label>
    </ligand>
    <ligandPart>
        <name>Fe</name>
        <dbReference type="ChEBI" id="CHEBI:18248"/>
    </ligandPart>
</feature>
<feature type="binding site" description="axial binding residue" evidence="3">
    <location>
        <position position="203"/>
    </location>
    <ligand>
        <name>heme b</name>
        <dbReference type="ChEBI" id="CHEBI:60344"/>
        <label>b566</label>
    </ligand>
    <ligandPart>
        <name>Fe</name>
        <dbReference type="ChEBI" id="CHEBI:18248"/>
    </ligandPart>
</feature>
<feature type="binding site" evidence="2">
    <location>
        <position position="208"/>
    </location>
    <ligand>
        <name>a ubiquinone</name>
        <dbReference type="ChEBI" id="CHEBI:16389"/>
    </ligand>
</feature>
<feature type="helix" evidence="14">
    <location>
        <begin position="10"/>
        <end position="12"/>
    </location>
</feature>
<feature type="turn" evidence="14">
    <location>
        <begin position="14"/>
        <end position="16"/>
    </location>
</feature>
<feature type="helix" evidence="14">
    <location>
        <begin position="17"/>
        <end position="23"/>
    </location>
</feature>
<feature type="strand" evidence="14">
    <location>
        <begin position="27"/>
        <end position="29"/>
    </location>
</feature>
<feature type="helix" evidence="14">
    <location>
        <begin position="34"/>
        <end position="36"/>
    </location>
</feature>
<feature type="helix" evidence="14">
    <location>
        <begin position="38"/>
        <end position="57"/>
    </location>
</feature>
<feature type="turn" evidence="14">
    <location>
        <begin position="64"/>
        <end position="66"/>
    </location>
</feature>
<feature type="helix" evidence="14">
    <location>
        <begin position="67"/>
        <end position="76"/>
    </location>
</feature>
<feature type="helix" evidence="14">
    <location>
        <begin position="81"/>
        <end position="108"/>
    </location>
</feature>
<feature type="turn" evidence="14">
    <location>
        <begin position="109"/>
        <end position="112"/>
    </location>
</feature>
<feature type="helix" evidence="14">
    <location>
        <begin position="117"/>
        <end position="139"/>
    </location>
</feature>
<feature type="helix" evidence="14">
    <location>
        <begin position="144"/>
        <end position="155"/>
    </location>
</feature>
<feature type="helix" evidence="14">
    <location>
        <begin position="156"/>
        <end position="159"/>
    </location>
</feature>
<feature type="turn" evidence="14">
    <location>
        <begin position="161"/>
        <end position="163"/>
    </location>
</feature>
<feature type="helix" evidence="14">
    <location>
        <begin position="164"/>
        <end position="172"/>
    </location>
</feature>
<feature type="strand" evidence="14">
    <location>
        <begin position="174"/>
        <end position="177"/>
    </location>
</feature>
<feature type="helix" evidence="14">
    <location>
        <begin position="179"/>
        <end position="210"/>
    </location>
</feature>
<feature type="helix" evidence="14">
    <location>
        <begin position="221"/>
        <end position="223"/>
    </location>
</feature>
<feature type="strand" evidence="14">
    <location>
        <begin position="224"/>
        <end position="226"/>
    </location>
</feature>
<feature type="helix" evidence="14">
    <location>
        <begin position="227"/>
        <end position="252"/>
    </location>
</feature>
<feature type="turn" evidence="14">
    <location>
        <begin position="254"/>
        <end position="257"/>
    </location>
</feature>
<feature type="helix" evidence="14">
    <location>
        <begin position="260"/>
        <end position="263"/>
    </location>
</feature>
<feature type="helix" evidence="14">
    <location>
        <begin position="279"/>
        <end position="281"/>
    </location>
</feature>
<feature type="helix" evidence="14">
    <location>
        <begin position="282"/>
        <end position="290"/>
    </location>
</feature>
<feature type="strand" evidence="14">
    <location>
        <begin position="291"/>
        <end position="293"/>
    </location>
</feature>
<feature type="helix" evidence="14">
    <location>
        <begin position="294"/>
        <end position="310"/>
    </location>
</feature>
<feature type="helix" evidence="14">
    <location>
        <begin position="311"/>
        <end position="313"/>
    </location>
</feature>
<feature type="helix" evidence="14">
    <location>
        <begin position="322"/>
        <end position="324"/>
    </location>
</feature>
<feature type="helix" evidence="14">
    <location>
        <begin position="326"/>
        <end position="346"/>
    </location>
</feature>
<feature type="helix" evidence="14">
    <location>
        <begin position="354"/>
        <end position="379"/>
    </location>
</feature>
<feature type="helix" evidence="14">
    <location>
        <begin position="382"/>
        <end position="385"/>
    </location>
</feature>
<geneLocation type="mitochondrion"/>
<keyword id="KW-0002">3D-structure</keyword>
<keyword id="KW-0249">Electron transport</keyword>
<keyword id="KW-0349">Heme</keyword>
<keyword id="KW-0408">Iron</keyword>
<keyword id="KW-0472">Membrane</keyword>
<keyword id="KW-0479">Metal-binding</keyword>
<keyword id="KW-0496">Mitochondrion</keyword>
<keyword id="KW-0999">Mitochondrion inner membrane</keyword>
<keyword id="KW-1185">Reference proteome</keyword>
<keyword id="KW-0679">Respiratory chain</keyword>
<keyword id="KW-0691">RNA editing</keyword>
<keyword id="KW-0812">Transmembrane</keyword>
<keyword id="KW-1133">Transmembrane helix</keyword>
<keyword id="KW-0813">Transport</keyword>
<keyword id="KW-0830">Ubiquinone</keyword>